<reference key="1">
    <citation type="journal article" date="2008" name="J. Biotechnol.">
        <title>Ultrafast pyrosequencing of Corynebacterium kroppenstedtii DSM44385 revealed insights into the physiology of a lipophilic corynebacterium that lacks mycolic acids.</title>
        <authorList>
            <person name="Tauch A."/>
            <person name="Schneider J."/>
            <person name="Szczepanowski R."/>
            <person name="Tilker A."/>
            <person name="Viehoever P."/>
            <person name="Gartemann K.-H."/>
            <person name="Arnold W."/>
            <person name="Blom J."/>
            <person name="Brinkrolf K."/>
            <person name="Brune I."/>
            <person name="Goetker S."/>
            <person name="Weisshaar B."/>
            <person name="Goesmann A."/>
            <person name="Droege M."/>
            <person name="Puehler A."/>
        </authorList>
    </citation>
    <scope>NUCLEOTIDE SEQUENCE [LARGE SCALE GENOMIC DNA]</scope>
    <source>
        <strain>DSM 44385 / JCM 11950 / CIP 105744 / CCUG 35717</strain>
    </source>
</reference>
<feature type="chain" id="PRO_0000400181" description="1D-myo-inositol 2-acetamido-2-deoxy-alpha-D-glucopyranoside deacetylase">
    <location>
        <begin position="1"/>
        <end position="388"/>
    </location>
</feature>
<feature type="region of interest" description="Disordered" evidence="2">
    <location>
        <begin position="369"/>
        <end position="388"/>
    </location>
</feature>
<feature type="binding site" evidence="1">
    <location>
        <position position="6"/>
    </location>
    <ligand>
        <name>Zn(2+)</name>
        <dbReference type="ChEBI" id="CHEBI:29105"/>
    </ligand>
</feature>
<feature type="binding site" evidence="1">
    <location>
        <position position="9"/>
    </location>
    <ligand>
        <name>Zn(2+)</name>
        <dbReference type="ChEBI" id="CHEBI:29105"/>
    </ligand>
</feature>
<feature type="binding site" evidence="1">
    <location>
        <position position="144"/>
    </location>
    <ligand>
        <name>Zn(2+)</name>
        <dbReference type="ChEBI" id="CHEBI:29105"/>
    </ligand>
</feature>
<proteinExistence type="inferred from homology"/>
<evidence type="ECO:0000255" key="1">
    <source>
        <dbReference type="HAMAP-Rule" id="MF_01696"/>
    </source>
</evidence>
<evidence type="ECO:0000256" key="2">
    <source>
        <dbReference type="SAM" id="MobiDB-lite"/>
    </source>
</evidence>
<sequence>MAVHAHPDDEALWTGGLLAHLSRRGADVRVVTCTLGEQGEVIGEPMQGLIADEADMLGGFRYRELEDSLRILGVNGVHHRPCVLGGVGCWRDSGMVGTPSADHPRAFVKSGQQAVDALKALMSEFCPDIVVTYGPDGGYGHPDHIRAHEITHAAVAELPHTSAPELGGDNTDLFSAVLARRHGGRETSADHGIPDPVVLWAVRGETALKQAGRAISRIPDGWVAPSGMDFSFVDGAAGAVDSASSEKTPDKITEPDLAFVPDDLVDLAVQLSDADIEAQANAMAAHATQLWIADGRQSWTNPESAWAVSDPTVAPKVFALSNRIAQPLMREEHYVVAYGGSGPWAKTTPARYAYDSSVVRARGRSAFSLDQADEGAAHDTSEQSGQRR</sequence>
<gene>
    <name evidence="1" type="primary">mshB</name>
    <name type="ordered locus">ckrop_0626</name>
</gene>
<dbReference type="EC" id="3.5.1.103" evidence="1"/>
<dbReference type="EMBL" id="CP001620">
    <property type="protein sequence ID" value="ACR17389.1"/>
    <property type="molecule type" value="Genomic_DNA"/>
</dbReference>
<dbReference type="SMR" id="C4LHT4"/>
<dbReference type="STRING" id="645127.ckrop_0626"/>
<dbReference type="KEGG" id="ckp:ckrop_0626"/>
<dbReference type="eggNOG" id="COG2120">
    <property type="taxonomic scope" value="Bacteria"/>
</dbReference>
<dbReference type="HOGENOM" id="CLU_049311_2_3_11"/>
<dbReference type="Proteomes" id="UP000001473">
    <property type="component" value="Chromosome"/>
</dbReference>
<dbReference type="GO" id="GO:0035595">
    <property type="term" value="F:N-acetylglucosaminylinositol deacetylase activity"/>
    <property type="evidence" value="ECO:0007669"/>
    <property type="project" value="UniProtKB-EC"/>
</dbReference>
<dbReference type="GO" id="GO:0008270">
    <property type="term" value="F:zinc ion binding"/>
    <property type="evidence" value="ECO:0007669"/>
    <property type="project" value="UniProtKB-UniRule"/>
</dbReference>
<dbReference type="GO" id="GO:0010125">
    <property type="term" value="P:mycothiol biosynthetic process"/>
    <property type="evidence" value="ECO:0007669"/>
    <property type="project" value="UniProtKB-UniRule"/>
</dbReference>
<dbReference type="Gene3D" id="3.40.50.10320">
    <property type="entry name" value="LmbE-like"/>
    <property type="match status" value="1"/>
</dbReference>
<dbReference type="HAMAP" id="MF_01696">
    <property type="entry name" value="MshB"/>
    <property type="match status" value="1"/>
</dbReference>
<dbReference type="InterPro" id="IPR003737">
    <property type="entry name" value="GlcNAc_PI_deacetylase-related"/>
</dbReference>
<dbReference type="InterPro" id="IPR024078">
    <property type="entry name" value="LmbE-like_dom_sf"/>
</dbReference>
<dbReference type="InterPro" id="IPR017810">
    <property type="entry name" value="Mycothiol_biosynthesis_MshB"/>
</dbReference>
<dbReference type="PANTHER" id="PTHR12993:SF26">
    <property type="entry name" value="1D-MYO-INOSITOL 2-ACETAMIDO-2-DEOXY-ALPHA-D-GLUCOPYRANOSIDE DEACETYLASE"/>
    <property type="match status" value="1"/>
</dbReference>
<dbReference type="PANTHER" id="PTHR12993">
    <property type="entry name" value="N-ACETYLGLUCOSAMINYL-PHOSPHATIDYLINOSITOL DE-N-ACETYLASE-RELATED"/>
    <property type="match status" value="1"/>
</dbReference>
<dbReference type="Pfam" id="PF02585">
    <property type="entry name" value="PIG-L"/>
    <property type="match status" value="1"/>
</dbReference>
<dbReference type="SUPFAM" id="SSF102588">
    <property type="entry name" value="LmbE-like"/>
    <property type="match status" value="1"/>
</dbReference>
<keyword id="KW-0378">Hydrolase</keyword>
<keyword id="KW-0479">Metal-binding</keyword>
<keyword id="KW-1185">Reference proteome</keyword>
<keyword id="KW-0862">Zinc</keyword>
<comment type="function">
    <text evidence="1">Catalyzes the deacetylation of 1D-myo-inositol 2-acetamido-2-deoxy-alpha-D-glucopyranoside (GlcNAc-Ins) in the mycothiol biosynthesis pathway.</text>
</comment>
<comment type="catalytic activity">
    <reaction evidence="1">
        <text>1D-myo-inositol 2-acetamido-2-deoxy-alpha-D-glucopyranoside + H2O = 1D-myo-inositol 2-amino-2-deoxy-alpha-D-glucopyranoside + acetate</text>
        <dbReference type="Rhea" id="RHEA:26180"/>
        <dbReference type="ChEBI" id="CHEBI:15377"/>
        <dbReference type="ChEBI" id="CHEBI:30089"/>
        <dbReference type="ChEBI" id="CHEBI:52442"/>
        <dbReference type="ChEBI" id="CHEBI:58886"/>
        <dbReference type="EC" id="3.5.1.103"/>
    </reaction>
</comment>
<comment type="cofactor">
    <cofactor evidence="1">
        <name>Zn(2+)</name>
        <dbReference type="ChEBI" id="CHEBI:29105"/>
    </cofactor>
    <text evidence="1">Binds 1 zinc ion per subunit.</text>
</comment>
<comment type="similarity">
    <text evidence="1">Belongs to the MshB deacetylase family.</text>
</comment>
<protein>
    <recommendedName>
        <fullName evidence="1">1D-myo-inositol 2-acetamido-2-deoxy-alpha-D-glucopyranoside deacetylase</fullName>
        <shortName evidence="1">GlcNAc-Ins deacetylase</shortName>
        <ecNumber evidence="1">3.5.1.103</ecNumber>
    </recommendedName>
    <alternativeName>
        <fullName>N-acetyl-1-D-myo-inositol 2-amino-2-deoxy-alpha-D-glucopyranoside deacetylase</fullName>
    </alternativeName>
</protein>
<organism>
    <name type="scientific">Corynebacterium kroppenstedtii (strain DSM 44385 / JCM 11950 / CIP 105744 / CCUG 35717)</name>
    <dbReference type="NCBI Taxonomy" id="645127"/>
    <lineage>
        <taxon>Bacteria</taxon>
        <taxon>Bacillati</taxon>
        <taxon>Actinomycetota</taxon>
        <taxon>Actinomycetes</taxon>
        <taxon>Mycobacteriales</taxon>
        <taxon>Corynebacteriaceae</taxon>
        <taxon>Corynebacterium</taxon>
    </lineage>
</organism>
<name>MSHB_CORK4</name>
<accession>C4LHT4</accession>